<protein>
    <recommendedName>
        <fullName>Fibrinogen alpha chain</fullName>
    </recommendedName>
    <component>
        <recommendedName>
            <fullName>Fibrinopeptide A</fullName>
        </recommendedName>
    </component>
</protein>
<gene>
    <name type="primary">FGA</name>
</gene>
<name>FIBA_CERSI</name>
<feature type="peptide" id="PRO_0000009016" description="Fibrinopeptide A">
    <location>
        <begin position="1"/>
        <end position="16"/>
    </location>
</feature>
<feature type="non-terminal residue">
    <location>
        <position position="16"/>
    </location>
</feature>
<comment type="function">
    <text evidence="1">Cleaved by the protease thrombin to yield monomers which, together with fibrinogen beta (FGB) and fibrinogen gamma (FGG), polymerize to form an insoluble fibrin matrix. Fibrin has a major function in hemostasis as one of the primary components of blood clots. In addition, functions during the early stages of wound repair to stabilize the lesion and guide cell migration during re-epithelialization. Was originally thought to be essential for platelet aggregation, based on in vitro studies using anticoagulated blood. However, subsequent studies have shown that it is not absolutely required for thrombus formation in vivo. Enhances expression of SELP in activated platelets via an ITGB3-dependent pathway. Maternal fibrinogen is essential for successful pregnancy. Fibrin deposition is also associated with infection, where it protects against IFNG-mediated hemorrhage. May also facilitate the immune response via both innate and T-cell mediated pathways.</text>
</comment>
<comment type="subunit">
    <text evidence="2">Heterohexamer; disulfide linked. Contains 2 sets of 3 non-identical chains (alpha, beta and gamma). The 2 heterotrimers are in head to head conformation with the N-termini in a small central domain (By similarity).</text>
</comment>
<comment type="subcellular location">
    <subcellularLocation>
        <location>Secreted</location>
    </subcellularLocation>
</comment>
<comment type="domain">
    <text evidence="2">A long coiled coil structure formed by 3 polypeptide chains connects the central nodule to the C-terminal domains (distal nodules). The long C-terminal ends of the alpha chains fold back, contributing a fourth strand to the coiled coil structure.</text>
</comment>
<comment type="PTM">
    <text>Conversion of fibrinogen to fibrin is triggered by thrombin, which cleaves fibrinopeptides A and B from alpha and beta chains, and thus exposes the N-terminal polymerization sites responsible for the formation of the soft clot. The soft clot is converted into the hard clot by factor XIIIA which catalyzes the epsilon-(gamma-glutamyl)lysine cross-linking between gamma chains (stronger) and between alpha chains (weaker) of different monomers.</text>
</comment>
<comment type="PTM">
    <text>Forms F13A-mediated cross-links between a glutamine and the epsilon-amino group of a lysine residue, forming fibronectin-fibrinogen heteropolymers.</text>
</comment>
<reference key="1">
    <citation type="journal article" date="1973" name="Syst. Zool.">
        <title>Mammalian phylogeny based on fibrinopeptide amino acid sequences.</title>
        <authorList>
            <person name="O'Neil P.B."/>
            <person name="Doolittle R.F."/>
        </authorList>
    </citation>
    <scope>PROTEIN SEQUENCE</scope>
</reference>
<sequence>TETTEGDFIAEGGGVR</sequence>
<keyword id="KW-1064">Adaptive immunity</keyword>
<keyword id="KW-0094">Blood coagulation</keyword>
<keyword id="KW-0175">Coiled coil</keyword>
<keyword id="KW-0903">Direct protein sequencing</keyword>
<keyword id="KW-1015">Disulfide bond</keyword>
<keyword id="KW-0356">Hemostasis</keyword>
<keyword id="KW-0391">Immunity</keyword>
<keyword id="KW-0399">Innate immunity</keyword>
<keyword id="KW-0964">Secreted</keyword>
<accession>P14535</accession>
<proteinExistence type="evidence at protein level"/>
<organism>
    <name type="scientific">Ceratotherium simum</name>
    <name type="common">White rhinoceros</name>
    <name type="synonym">Square-lipped rhinoceros</name>
    <dbReference type="NCBI Taxonomy" id="9807"/>
    <lineage>
        <taxon>Eukaryota</taxon>
        <taxon>Metazoa</taxon>
        <taxon>Chordata</taxon>
        <taxon>Craniata</taxon>
        <taxon>Vertebrata</taxon>
        <taxon>Euteleostomi</taxon>
        <taxon>Mammalia</taxon>
        <taxon>Eutheria</taxon>
        <taxon>Laurasiatheria</taxon>
        <taxon>Perissodactyla</taxon>
        <taxon>Rhinocerotidae</taxon>
        <taxon>Ceratotherium</taxon>
    </lineage>
</organism>
<evidence type="ECO:0000250" key="1">
    <source>
        <dbReference type="UniProtKB" id="E9PV24"/>
    </source>
</evidence>
<evidence type="ECO:0000250" key="2">
    <source>
        <dbReference type="UniProtKB" id="P02671"/>
    </source>
</evidence>
<dbReference type="GO" id="GO:0005576">
    <property type="term" value="C:extracellular region"/>
    <property type="evidence" value="ECO:0007669"/>
    <property type="project" value="UniProtKB-SubCell"/>
</dbReference>
<dbReference type="GO" id="GO:0002250">
    <property type="term" value="P:adaptive immune response"/>
    <property type="evidence" value="ECO:0007669"/>
    <property type="project" value="UniProtKB-KW"/>
</dbReference>
<dbReference type="GO" id="GO:0007596">
    <property type="term" value="P:blood coagulation"/>
    <property type="evidence" value="ECO:0007669"/>
    <property type="project" value="UniProtKB-KW"/>
</dbReference>
<dbReference type="GO" id="GO:0045087">
    <property type="term" value="P:innate immune response"/>
    <property type="evidence" value="ECO:0007669"/>
    <property type="project" value="UniProtKB-KW"/>
</dbReference>